<keyword id="KW-0030">Aminoacyl-tRNA synthetase</keyword>
<keyword id="KW-0067">ATP-binding</keyword>
<keyword id="KW-0963">Cytoplasm</keyword>
<keyword id="KW-0436">Ligase</keyword>
<keyword id="KW-0547">Nucleotide-binding</keyword>
<keyword id="KW-0648">Protein biosynthesis</keyword>
<keyword id="KW-1185">Reference proteome</keyword>
<feature type="chain" id="PRO_0000110885" description="Aspartate--tRNA ligase">
    <location>
        <begin position="1"/>
        <end position="589"/>
    </location>
</feature>
<feature type="region of interest" description="Aspartate" evidence="1">
    <location>
        <begin position="195"/>
        <end position="198"/>
    </location>
</feature>
<feature type="binding site" evidence="1">
    <location>
        <position position="171"/>
    </location>
    <ligand>
        <name>L-aspartate</name>
        <dbReference type="ChEBI" id="CHEBI:29991"/>
    </ligand>
</feature>
<feature type="binding site" evidence="1">
    <location>
        <begin position="217"/>
        <end position="219"/>
    </location>
    <ligand>
        <name>ATP</name>
        <dbReference type="ChEBI" id="CHEBI:30616"/>
    </ligand>
</feature>
<feature type="binding site" evidence="1">
    <location>
        <position position="217"/>
    </location>
    <ligand>
        <name>L-aspartate</name>
        <dbReference type="ChEBI" id="CHEBI:29991"/>
    </ligand>
</feature>
<feature type="binding site" evidence="1">
    <location>
        <position position="226"/>
    </location>
    <ligand>
        <name>ATP</name>
        <dbReference type="ChEBI" id="CHEBI:30616"/>
    </ligand>
</feature>
<feature type="binding site" evidence="1">
    <location>
        <position position="448"/>
    </location>
    <ligand>
        <name>L-aspartate</name>
        <dbReference type="ChEBI" id="CHEBI:29991"/>
    </ligand>
</feature>
<feature type="binding site" evidence="1">
    <location>
        <position position="482"/>
    </location>
    <ligand>
        <name>ATP</name>
        <dbReference type="ChEBI" id="CHEBI:30616"/>
    </ligand>
</feature>
<feature type="binding site" evidence="1">
    <location>
        <position position="489"/>
    </location>
    <ligand>
        <name>L-aspartate</name>
        <dbReference type="ChEBI" id="CHEBI:29991"/>
    </ligand>
</feature>
<feature type="binding site" evidence="1">
    <location>
        <begin position="534"/>
        <end position="537"/>
    </location>
    <ligand>
        <name>ATP</name>
        <dbReference type="ChEBI" id="CHEBI:30616"/>
    </ligand>
</feature>
<dbReference type="EC" id="6.1.1.12" evidence="1"/>
<dbReference type="EMBL" id="AE017340">
    <property type="protein sequence ID" value="AAV81929.1"/>
    <property type="molecule type" value="Genomic_DNA"/>
</dbReference>
<dbReference type="RefSeq" id="WP_011234340.1">
    <property type="nucleotide sequence ID" value="NC_006512.1"/>
</dbReference>
<dbReference type="SMR" id="Q5QYV2"/>
<dbReference type="STRING" id="283942.IL1089"/>
<dbReference type="GeneID" id="41336257"/>
<dbReference type="KEGG" id="ilo:IL1089"/>
<dbReference type="eggNOG" id="COG0173">
    <property type="taxonomic scope" value="Bacteria"/>
</dbReference>
<dbReference type="HOGENOM" id="CLU_014330_3_2_6"/>
<dbReference type="OrthoDB" id="9802326at2"/>
<dbReference type="Proteomes" id="UP000001171">
    <property type="component" value="Chromosome"/>
</dbReference>
<dbReference type="GO" id="GO:0005737">
    <property type="term" value="C:cytoplasm"/>
    <property type="evidence" value="ECO:0007669"/>
    <property type="project" value="UniProtKB-SubCell"/>
</dbReference>
<dbReference type="GO" id="GO:0004815">
    <property type="term" value="F:aspartate-tRNA ligase activity"/>
    <property type="evidence" value="ECO:0007669"/>
    <property type="project" value="UniProtKB-UniRule"/>
</dbReference>
<dbReference type="GO" id="GO:0005524">
    <property type="term" value="F:ATP binding"/>
    <property type="evidence" value="ECO:0007669"/>
    <property type="project" value="UniProtKB-UniRule"/>
</dbReference>
<dbReference type="GO" id="GO:0003676">
    <property type="term" value="F:nucleic acid binding"/>
    <property type="evidence" value="ECO:0007669"/>
    <property type="project" value="InterPro"/>
</dbReference>
<dbReference type="GO" id="GO:0006422">
    <property type="term" value="P:aspartyl-tRNA aminoacylation"/>
    <property type="evidence" value="ECO:0007669"/>
    <property type="project" value="UniProtKB-UniRule"/>
</dbReference>
<dbReference type="CDD" id="cd00777">
    <property type="entry name" value="AspRS_core"/>
    <property type="match status" value="1"/>
</dbReference>
<dbReference type="CDD" id="cd04317">
    <property type="entry name" value="EcAspRS_like_N"/>
    <property type="match status" value="1"/>
</dbReference>
<dbReference type="Gene3D" id="3.30.930.10">
    <property type="entry name" value="Bira Bifunctional Protein, Domain 2"/>
    <property type="match status" value="1"/>
</dbReference>
<dbReference type="Gene3D" id="3.30.1360.30">
    <property type="entry name" value="GAD-like domain"/>
    <property type="match status" value="1"/>
</dbReference>
<dbReference type="Gene3D" id="2.40.50.140">
    <property type="entry name" value="Nucleic acid-binding proteins"/>
    <property type="match status" value="1"/>
</dbReference>
<dbReference type="HAMAP" id="MF_00044">
    <property type="entry name" value="Asp_tRNA_synth_type1"/>
    <property type="match status" value="1"/>
</dbReference>
<dbReference type="InterPro" id="IPR004364">
    <property type="entry name" value="Aa-tRNA-synt_II"/>
</dbReference>
<dbReference type="InterPro" id="IPR006195">
    <property type="entry name" value="aa-tRNA-synth_II"/>
</dbReference>
<dbReference type="InterPro" id="IPR045864">
    <property type="entry name" value="aa-tRNA-synth_II/BPL/LPL"/>
</dbReference>
<dbReference type="InterPro" id="IPR004524">
    <property type="entry name" value="Asp-tRNA-ligase_1"/>
</dbReference>
<dbReference type="InterPro" id="IPR047089">
    <property type="entry name" value="Asp-tRNA-ligase_1_N"/>
</dbReference>
<dbReference type="InterPro" id="IPR002312">
    <property type="entry name" value="Asp/Asn-tRNA-synth_IIb"/>
</dbReference>
<dbReference type="InterPro" id="IPR047090">
    <property type="entry name" value="AspRS_core"/>
</dbReference>
<dbReference type="InterPro" id="IPR004115">
    <property type="entry name" value="GAD-like_sf"/>
</dbReference>
<dbReference type="InterPro" id="IPR029351">
    <property type="entry name" value="GAD_dom"/>
</dbReference>
<dbReference type="InterPro" id="IPR012340">
    <property type="entry name" value="NA-bd_OB-fold"/>
</dbReference>
<dbReference type="InterPro" id="IPR004365">
    <property type="entry name" value="NA-bd_OB_tRNA"/>
</dbReference>
<dbReference type="NCBIfam" id="TIGR00459">
    <property type="entry name" value="aspS_bact"/>
    <property type="match status" value="1"/>
</dbReference>
<dbReference type="NCBIfam" id="NF001750">
    <property type="entry name" value="PRK00476.1"/>
    <property type="match status" value="1"/>
</dbReference>
<dbReference type="PANTHER" id="PTHR22594:SF5">
    <property type="entry name" value="ASPARTATE--TRNA LIGASE, MITOCHONDRIAL"/>
    <property type="match status" value="1"/>
</dbReference>
<dbReference type="PANTHER" id="PTHR22594">
    <property type="entry name" value="ASPARTYL/LYSYL-TRNA SYNTHETASE"/>
    <property type="match status" value="1"/>
</dbReference>
<dbReference type="Pfam" id="PF02938">
    <property type="entry name" value="GAD"/>
    <property type="match status" value="1"/>
</dbReference>
<dbReference type="Pfam" id="PF00152">
    <property type="entry name" value="tRNA-synt_2"/>
    <property type="match status" value="1"/>
</dbReference>
<dbReference type="Pfam" id="PF01336">
    <property type="entry name" value="tRNA_anti-codon"/>
    <property type="match status" value="1"/>
</dbReference>
<dbReference type="PRINTS" id="PR01042">
    <property type="entry name" value="TRNASYNTHASP"/>
</dbReference>
<dbReference type="SUPFAM" id="SSF55681">
    <property type="entry name" value="Class II aaRS and biotin synthetases"/>
    <property type="match status" value="1"/>
</dbReference>
<dbReference type="SUPFAM" id="SSF55261">
    <property type="entry name" value="GAD domain-like"/>
    <property type="match status" value="1"/>
</dbReference>
<dbReference type="SUPFAM" id="SSF50249">
    <property type="entry name" value="Nucleic acid-binding proteins"/>
    <property type="match status" value="1"/>
</dbReference>
<dbReference type="PROSITE" id="PS50862">
    <property type="entry name" value="AA_TRNA_LIGASE_II"/>
    <property type="match status" value="1"/>
</dbReference>
<name>SYD_IDILO</name>
<evidence type="ECO:0000255" key="1">
    <source>
        <dbReference type="HAMAP-Rule" id="MF_00044"/>
    </source>
</evidence>
<organism>
    <name type="scientific">Idiomarina loihiensis (strain ATCC BAA-735 / DSM 15497 / L2-TR)</name>
    <dbReference type="NCBI Taxonomy" id="283942"/>
    <lineage>
        <taxon>Bacteria</taxon>
        <taxon>Pseudomonadati</taxon>
        <taxon>Pseudomonadota</taxon>
        <taxon>Gammaproteobacteria</taxon>
        <taxon>Alteromonadales</taxon>
        <taxon>Idiomarinaceae</taxon>
        <taxon>Idiomarina</taxon>
    </lineage>
</organism>
<reference key="1">
    <citation type="journal article" date="2004" name="Proc. Natl. Acad. Sci. U.S.A.">
        <title>Genome sequence of the deep-sea gamma-proteobacterium Idiomarina loihiensis reveals amino acid fermentation as a source of carbon and energy.</title>
        <authorList>
            <person name="Hou S."/>
            <person name="Saw J.H."/>
            <person name="Lee K.S."/>
            <person name="Freitas T.A."/>
            <person name="Belisle C."/>
            <person name="Kawarabayasi Y."/>
            <person name="Donachie S.P."/>
            <person name="Pikina A."/>
            <person name="Galperin M.Y."/>
            <person name="Koonin E.V."/>
            <person name="Makarova K.S."/>
            <person name="Omelchenko M.V."/>
            <person name="Sorokin A."/>
            <person name="Wolf Y.I."/>
            <person name="Li Q.X."/>
            <person name="Keum Y.S."/>
            <person name="Campbell S."/>
            <person name="Denery J."/>
            <person name="Aizawa S."/>
            <person name="Shibata S."/>
            <person name="Malahoff A."/>
            <person name="Alam M."/>
        </authorList>
    </citation>
    <scope>NUCLEOTIDE SEQUENCE [LARGE SCALE GENOMIC DNA]</scope>
    <source>
        <strain>ATCC BAA-735 / DSM 15497 / L2-TR</strain>
    </source>
</reference>
<gene>
    <name evidence="1" type="primary">aspS</name>
    <name type="ordered locus">IL1089</name>
</gene>
<proteinExistence type="inferred from homology"/>
<sequence>MRTHYCGQINAELAGQEVTLCGWVNKRRDLGGLIFIDLRDREGLLQVVFDPDQKALFETANSLRQEFCVRLSGKVNRRPESQVNKNMATGEVELLATDLEIFSRSEPLPIDFNQQVSEEARLRYRYLDLRRPQMNEKLQFRAKVTSAVRRFFDDNGFLDIETPMLTRATPEGARDYLVPSRTHKGRFFALPQSPQLFKQLLMMSGFDRYYQIVKCFRDEDLRADRQPEFTQIDIETSFMSAEQVMEITEQMARDLFKQLLDVDLGEFPSMTWHEAMRRFGSDKPDLRNPLELVDVADVLKDVEFKVFSGPANDEEGRVAAIRLPGQAENVSRKMIDEYTQFVGIYGAKGLAWIKVNDRSAGREGLQSPVLKFLPDEVIEPLLERMQAETGDVLFFGSDKSHVVAEALGALRLKLGKDFELVSNEWKPLWVVDFPMFEVADDGSLAALHHPFTAPVNVTPEELKANPAAAISNAYDMVLNGVELGGGSVRIHENAMQQAVFEVLGIEKDEAQEKFGFLLEALKYGTPPHAGLAFGLDRLVMLMVGASSIRDVIAFPKTTTAACVLTDAPGAANPAALQELGVKSIVKEDE</sequence>
<comment type="function">
    <text evidence="1">Catalyzes the attachment of L-aspartate to tRNA(Asp) in a two-step reaction: L-aspartate is first activated by ATP to form Asp-AMP and then transferred to the acceptor end of tRNA(Asp).</text>
</comment>
<comment type="catalytic activity">
    <reaction evidence="1">
        <text>tRNA(Asp) + L-aspartate + ATP = L-aspartyl-tRNA(Asp) + AMP + diphosphate</text>
        <dbReference type="Rhea" id="RHEA:19649"/>
        <dbReference type="Rhea" id="RHEA-COMP:9660"/>
        <dbReference type="Rhea" id="RHEA-COMP:9678"/>
        <dbReference type="ChEBI" id="CHEBI:29991"/>
        <dbReference type="ChEBI" id="CHEBI:30616"/>
        <dbReference type="ChEBI" id="CHEBI:33019"/>
        <dbReference type="ChEBI" id="CHEBI:78442"/>
        <dbReference type="ChEBI" id="CHEBI:78516"/>
        <dbReference type="ChEBI" id="CHEBI:456215"/>
        <dbReference type="EC" id="6.1.1.12"/>
    </reaction>
</comment>
<comment type="subunit">
    <text evidence="1">Homodimer.</text>
</comment>
<comment type="subcellular location">
    <subcellularLocation>
        <location evidence="1">Cytoplasm</location>
    </subcellularLocation>
</comment>
<comment type="similarity">
    <text evidence="1">Belongs to the class-II aminoacyl-tRNA synthetase family. Type 1 subfamily.</text>
</comment>
<protein>
    <recommendedName>
        <fullName evidence="1">Aspartate--tRNA ligase</fullName>
        <ecNumber evidence="1">6.1.1.12</ecNumber>
    </recommendedName>
    <alternativeName>
        <fullName evidence="1">Aspartyl-tRNA synthetase</fullName>
        <shortName evidence="1">AspRS</shortName>
    </alternativeName>
</protein>
<accession>Q5QYV2</accession>